<sequence>MRLHAFTLLSLLGLVPSFAAASLSGSVGPLTSASAKAAKKTCNVLDYGAKADKKTDLGPPLAAAFAACKSGGLVYIPAGDYAMSTWVKLANGKAWALQIDGVIYRTGTDGGNMIMIEHTSDFELYSSTSSGAMQGLGYEFHASNNWSGPRLLRLWDVSDFSVHDLILVDSPSFHFSIDTCSNGEVYNMAIRGGNHGGLDGVDVWSTNIWIHDLEVTNKDECVTVKSPAKNILVENIYCNLSGGCAMGSLGADTDISDITYKNIYTWNSNQMMMIKSNGGSGTVSNVVFENFIGHGNAYSLDIDSFWSSMSAVSGDGVTLNNITIKNWKGTEANGAQRGPIKIICPDKVPCYNILIEDFAMWTETGSKQWYSCQSAYGSGFCLKSGSHHTSYAVTTTTVSSAPSGYSAAKMASDLSTDSGSTKSIPIPTIPTSFYPGATPYSALMSKQSTKAAKARAVDMSVETPAAASRSEQVVQGAPQETGQSAPESAGPVPSGNPGPVPTGGSRPSRHRHGHHHFGSAI</sequence>
<gene>
    <name type="primary">rhgB</name>
    <name type="ORF">AFUA_5G10530</name>
</gene>
<organism>
    <name type="scientific">Aspergillus fumigatus (strain ATCC MYA-4609 / CBS 101355 / FGSC A1100 / Af293)</name>
    <name type="common">Neosartorya fumigata</name>
    <dbReference type="NCBI Taxonomy" id="330879"/>
    <lineage>
        <taxon>Eukaryota</taxon>
        <taxon>Fungi</taxon>
        <taxon>Dikarya</taxon>
        <taxon>Ascomycota</taxon>
        <taxon>Pezizomycotina</taxon>
        <taxon>Eurotiomycetes</taxon>
        <taxon>Eurotiomycetidae</taxon>
        <taxon>Eurotiales</taxon>
        <taxon>Aspergillaceae</taxon>
        <taxon>Aspergillus</taxon>
        <taxon>Aspergillus subgen. Fumigati</taxon>
    </lineage>
</organism>
<keyword id="KW-0119">Carbohydrate metabolism</keyword>
<keyword id="KW-0961">Cell wall biogenesis/degradation</keyword>
<keyword id="KW-1015">Disulfide bond</keyword>
<keyword id="KW-0325">Glycoprotein</keyword>
<keyword id="KW-0326">Glycosidase</keyword>
<keyword id="KW-0378">Hydrolase</keyword>
<keyword id="KW-0624">Polysaccharide degradation</keyword>
<keyword id="KW-1185">Reference proteome</keyword>
<keyword id="KW-0964">Secreted</keyword>
<keyword id="KW-0732">Signal</keyword>
<accession>Q4WV23</accession>
<reference key="1">
    <citation type="journal article" date="2005" name="Nature">
        <title>Genomic sequence of the pathogenic and allergenic filamentous fungus Aspergillus fumigatus.</title>
        <authorList>
            <person name="Nierman W.C."/>
            <person name="Pain A."/>
            <person name="Anderson M.J."/>
            <person name="Wortman J.R."/>
            <person name="Kim H.S."/>
            <person name="Arroyo J."/>
            <person name="Berriman M."/>
            <person name="Abe K."/>
            <person name="Archer D.B."/>
            <person name="Bermejo C."/>
            <person name="Bennett J.W."/>
            <person name="Bowyer P."/>
            <person name="Chen D."/>
            <person name="Collins M."/>
            <person name="Coulsen R."/>
            <person name="Davies R."/>
            <person name="Dyer P.S."/>
            <person name="Farman M.L."/>
            <person name="Fedorova N."/>
            <person name="Fedorova N.D."/>
            <person name="Feldblyum T.V."/>
            <person name="Fischer R."/>
            <person name="Fosker N."/>
            <person name="Fraser A."/>
            <person name="Garcia J.L."/>
            <person name="Garcia M.J."/>
            <person name="Goble A."/>
            <person name="Goldman G.H."/>
            <person name="Gomi K."/>
            <person name="Griffith-Jones S."/>
            <person name="Gwilliam R."/>
            <person name="Haas B.J."/>
            <person name="Haas H."/>
            <person name="Harris D.E."/>
            <person name="Horiuchi H."/>
            <person name="Huang J."/>
            <person name="Humphray S."/>
            <person name="Jimenez J."/>
            <person name="Keller N."/>
            <person name="Khouri H."/>
            <person name="Kitamoto K."/>
            <person name="Kobayashi T."/>
            <person name="Konzack S."/>
            <person name="Kulkarni R."/>
            <person name="Kumagai T."/>
            <person name="Lafton A."/>
            <person name="Latge J.-P."/>
            <person name="Li W."/>
            <person name="Lord A."/>
            <person name="Lu C."/>
            <person name="Majoros W.H."/>
            <person name="May G.S."/>
            <person name="Miller B.L."/>
            <person name="Mohamoud Y."/>
            <person name="Molina M."/>
            <person name="Monod M."/>
            <person name="Mouyna I."/>
            <person name="Mulligan S."/>
            <person name="Murphy L.D."/>
            <person name="O'Neil S."/>
            <person name="Paulsen I."/>
            <person name="Penalva M.A."/>
            <person name="Pertea M."/>
            <person name="Price C."/>
            <person name="Pritchard B.L."/>
            <person name="Quail M.A."/>
            <person name="Rabbinowitsch E."/>
            <person name="Rawlins N."/>
            <person name="Rajandream M.A."/>
            <person name="Reichard U."/>
            <person name="Renauld H."/>
            <person name="Robson G.D."/>
            <person name="Rodriguez de Cordoba S."/>
            <person name="Rodriguez-Pena J.M."/>
            <person name="Ronning C.M."/>
            <person name="Rutter S."/>
            <person name="Salzberg S.L."/>
            <person name="Sanchez M."/>
            <person name="Sanchez-Ferrero J.C."/>
            <person name="Saunders D."/>
            <person name="Seeger K."/>
            <person name="Squares R."/>
            <person name="Squares S."/>
            <person name="Takeuchi M."/>
            <person name="Tekaia F."/>
            <person name="Turner G."/>
            <person name="Vazquez de Aldana C.R."/>
            <person name="Weidman J."/>
            <person name="White O."/>
            <person name="Woodward J.R."/>
            <person name="Yu J.-H."/>
            <person name="Fraser C.M."/>
            <person name="Galagan J.E."/>
            <person name="Asai K."/>
            <person name="Machida M."/>
            <person name="Hall N."/>
            <person name="Barrell B.G."/>
            <person name="Denning D.W."/>
        </authorList>
    </citation>
    <scope>NUCLEOTIDE SEQUENCE [LARGE SCALE GENOMIC DNA]</scope>
    <source>
        <strain>ATCC MYA-4609 / CBS 101355 / FGSC A1100 / Af293</strain>
    </source>
</reference>
<comment type="function">
    <text evidence="1">Pectinolytic enzymes consist of four classes of enzymes: pectine lyase, polygalacturonase, pectin methylesterase and rhamnogalacturonase. Hydrolyzes alpha-D-galacturonopyranosyl-(1,2)-alpha-L-rhamnopyranosyl linkages in the backbone of the hairy regions of pectins (By similarity).</text>
</comment>
<comment type="catalytic activity">
    <reaction>
        <text>Endohydrolysis of alpha-D-GalA-(1-&gt;2)-alpha-L-Rha glycosidic bond in the rhamnogalacturonan I backbone with initial inversion of anomeric configuration releasing oligosaccharides with beta-D-GalA at the reducing end.</text>
        <dbReference type="EC" id="3.2.1.171"/>
    </reaction>
</comment>
<comment type="subcellular location">
    <subcellularLocation>
        <location evidence="1">Secreted</location>
    </subcellularLocation>
</comment>
<comment type="similarity">
    <text evidence="4">Belongs to the glycosyl hydrolase 28 family.</text>
</comment>
<name>RHGB_ASPFU</name>
<dbReference type="EC" id="3.2.1.171"/>
<dbReference type="EMBL" id="AAHF01000003">
    <property type="protein sequence ID" value="EAL91553.1"/>
    <property type="molecule type" value="Genomic_DNA"/>
</dbReference>
<dbReference type="RefSeq" id="XP_753591.1">
    <property type="nucleotide sequence ID" value="XM_748498.1"/>
</dbReference>
<dbReference type="SMR" id="Q4WV23"/>
<dbReference type="STRING" id="330879.Q4WV23"/>
<dbReference type="GlyCosmos" id="Q4WV23">
    <property type="glycosylation" value="3 sites, No reported glycans"/>
</dbReference>
<dbReference type="EnsemblFungi" id="EAL91553">
    <property type="protein sequence ID" value="EAL91553"/>
    <property type="gene ID" value="AFUA_5G10530"/>
</dbReference>
<dbReference type="GeneID" id="3511456"/>
<dbReference type="KEGG" id="afm:AFUA_5G10530"/>
<dbReference type="VEuPathDB" id="FungiDB:Afu5g10530"/>
<dbReference type="eggNOG" id="ENOG502R2FT">
    <property type="taxonomic scope" value="Eukaryota"/>
</dbReference>
<dbReference type="HOGENOM" id="CLU_016031_7_2_1"/>
<dbReference type="InParanoid" id="Q4WV23"/>
<dbReference type="OMA" id="NMMLIKS"/>
<dbReference type="OrthoDB" id="2268901at2759"/>
<dbReference type="Proteomes" id="UP000002530">
    <property type="component" value="Chromosome 5"/>
</dbReference>
<dbReference type="GO" id="GO:0005576">
    <property type="term" value="C:extracellular region"/>
    <property type="evidence" value="ECO:0007669"/>
    <property type="project" value="UniProtKB-SubCell"/>
</dbReference>
<dbReference type="GO" id="GO:0004650">
    <property type="term" value="F:polygalacturonase activity"/>
    <property type="evidence" value="ECO:0007669"/>
    <property type="project" value="InterPro"/>
</dbReference>
<dbReference type="GO" id="GO:0046576">
    <property type="term" value="F:rhamnogalacturonan alpha-L-rhamnopyranosyl-(1-&gt;4)-alpha-D-galactopyranosyluronide lyase activity"/>
    <property type="evidence" value="ECO:0000250"/>
    <property type="project" value="UniProtKB"/>
</dbReference>
<dbReference type="GO" id="GO:0071555">
    <property type="term" value="P:cell wall organization"/>
    <property type="evidence" value="ECO:0007669"/>
    <property type="project" value="UniProtKB-KW"/>
</dbReference>
<dbReference type="GO" id="GO:0045490">
    <property type="term" value="P:pectin catabolic process"/>
    <property type="evidence" value="ECO:0000250"/>
    <property type="project" value="UniProtKB"/>
</dbReference>
<dbReference type="FunFam" id="2.160.20.10:FF:000025">
    <property type="entry name" value="Probable rhamnogalacturonase B"/>
    <property type="match status" value="1"/>
</dbReference>
<dbReference type="Gene3D" id="2.160.20.10">
    <property type="entry name" value="Single-stranded right-handed beta-helix, Pectin lyase-like"/>
    <property type="match status" value="1"/>
</dbReference>
<dbReference type="InterPro" id="IPR000743">
    <property type="entry name" value="Glyco_hydro_28"/>
</dbReference>
<dbReference type="InterPro" id="IPR012334">
    <property type="entry name" value="Pectin_lyas_fold"/>
</dbReference>
<dbReference type="InterPro" id="IPR011050">
    <property type="entry name" value="Pectin_lyase_fold/virulence"/>
</dbReference>
<dbReference type="InterPro" id="IPR024535">
    <property type="entry name" value="RHGA/B-epi-like_pectate_lyase"/>
</dbReference>
<dbReference type="PANTHER" id="PTHR31736">
    <property type="match status" value="1"/>
</dbReference>
<dbReference type="PANTHER" id="PTHR31736:SF19">
    <property type="entry name" value="PECTIN LYASE SUPERFAMILY PROTEIN-RELATED"/>
    <property type="match status" value="1"/>
</dbReference>
<dbReference type="Pfam" id="PF00295">
    <property type="entry name" value="Glyco_hydro_28"/>
    <property type="match status" value="1"/>
</dbReference>
<dbReference type="Pfam" id="PF12708">
    <property type="entry name" value="Pect-lyase_RHGA_epim"/>
    <property type="match status" value="1"/>
</dbReference>
<dbReference type="SUPFAM" id="SSF51126">
    <property type="entry name" value="Pectin lyase-like"/>
    <property type="match status" value="1"/>
</dbReference>
<feature type="signal peptide" evidence="2">
    <location>
        <begin position="1"/>
        <end position="21"/>
    </location>
</feature>
<feature type="chain" id="PRO_0000394387" description="Probable rhamnogalacturonase B">
    <location>
        <begin position="22"/>
        <end position="521"/>
    </location>
</feature>
<feature type="region of interest" description="Disordered" evidence="3">
    <location>
        <begin position="462"/>
        <end position="521"/>
    </location>
</feature>
<feature type="compositionally biased region" description="Polar residues" evidence="3">
    <location>
        <begin position="469"/>
        <end position="486"/>
    </location>
</feature>
<feature type="compositionally biased region" description="Basic residues" evidence="3">
    <location>
        <begin position="507"/>
        <end position="521"/>
    </location>
</feature>
<feature type="active site" description="Proton donor" evidence="1">
    <location>
        <position position="219"/>
    </location>
</feature>
<feature type="active site" evidence="1">
    <location>
        <position position="294"/>
    </location>
</feature>
<feature type="glycosylation site" description="N-linked (GlcNAc...) asparagine" evidence="2">
    <location>
        <position position="145"/>
    </location>
</feature>
<feature type="glycosylation site" description="N-linked (GlcNAc...) asparagine" evidence="2">
    <location>
        <position position="239"/>
    </location>
</feature>
<feature type="glycosylation site" description="N-linked (GlcNAc...) asparagine" evidence="2">
    <location>
        <position position="321"/>
    </location>
</feature>
<feature type="disulfide bond" evidence="1">
    <location>
        <begin position="42"/>
        <end position="68"/>
    </location>
</feature>
<feature type="disulfide bond" evidence="1">
    <location>
        <begin position="221"/>
        <end position="238"/>
    </location>
</feature>
<feature type="disulfide bond" evidence="1">
    <location>
        <begin position="344"/>
        <end position="350"/>
    </location>
</feature>
<feature type="disulfide bond" evidence="1">
    <location>
        <begin position="372"/>
        <end position="381"/>
    </location>
</feature>
<proteinExistence type="inferred from homology"/>
<evidence type="ECO:0000250" key="1"/>
<evidence type="ECO:0000255" key="2"/>
<evidence type="ECO:0000256" key="3">
    <source>
        <dbReference type="SAM" id="MobiDB-lite"/>
    </source>
</evidence>
<evidence type="ECO:0000305" key="4"/>
<protein>
    <recommendedName>
        <fullName>Probable rhamnogalacturonase B</fullName>
        <shortName>RGase B</shortName>
        <shortName>RHG B</shortName>
        <ecNumber>3.2.1.171</ecNumber>
    </recommendedName>
</protein>